<gene>
    <name evidence="1" type="primary">rpoZ</name>
    <name type="ordered locus">RPE_3027</name>
</gene>
<sequence>MARVTVEDCIDKVDNRFDLVLLAAHRARMISSGSQLTIDRDNDKNPVVSLREIADQTISPEDLREELVHSLQKFVEVDEPEPDTVPLIGSAGASVDADDTEVAVERMTEEELLKGLEGLAPPEEQPEEDE</sequence>
<dbReference type="EC" id="2.7.7.6" evidence="1"/>
<dbReference type="EMBL" id="CP000463">
    <property type="protein sequence ID" value="ABJ06964.1"/>
    <property type="molecule type" value="Genomic_DNA"/>
</dbReference>
<dbReference type="SMR" id="Q07M70"/>
<dbReference type="STRING" id="316055.RPE_3027"/>
<dbReference type="KEGG" id="rpe:RPE_3027"/>
<dbReference type="eggNOG" id="COG1758">
    <property type="taxonomic scope" value="Bacteria"/>
</dbReference>
<dbReference type="HOGENOM" id="CLU_125406_2_0_5"/>
<dbReference type="OrthoDB" id="9796300at2"/>
<dbReference type="GO" id="GO:0000428">
    <property type="term" value="C:DNA-directed RNA polymerase complex"/>
    <property type="evidence" value="ECO:0007669"/>
    <property type="project" value="UniProtKB-KW"/>
</dbReference>
<dbReference type="GO" id="GO:0003677">
    <property type="term" value="F:DNA binding"/>
    <property type="evidence" value="ECO:0007669"/>
    <property type="project" value="UniProtKB-UniRule"/>
</dbReference>
<dbReference type="GO" id="GO:0003899">
    <property type="term" value="F:DNA-directed RNA polymerase activity"/>
    <property type="evidence" value="ECO:0007669"/>
    <property type="project" value="UniProtKB-UniRule"/>
</dbReference>
<dbReference type="GO" id="GO:0006351">
    <property type="term" value="P:DNA-templated transcription"/>
    <property type="evidence" value="ECO:0007669"/>
    <property type="project" value="UniProtKB-UniRule"/>
</dbReference>
<dbReference type="Gene3D" id="3.90.940.10">
    <property type="match status" value="1"/>
</dbReference>
<dbReference type="HAMAP" id="MF_00366">
    <property type="entry name" value="RNApol_bact_RpoZ"/>
    <property type="match status" value="1"/>
</dbReference>
<dbReference type="InterPro" id="IPR003716">
    <property type="entry name" value="DNA-dir_RNA_pol_omega"/>
</dbReference>
<dbReference type="InterPro" id="IPR006110">
    <property type="entry name" value="Pol_omega/Rpo6/RPB6"/>
</dbReference>
<dbReference type="InterPro" id="IPR036161">
    <property type="entry name" value="RPB6/omega-like_sf"/>
</dbReference>
<dbReference type="NCBIfam" id="TIGR00690">
    <property type="entry name" value="rpoZ"/>
    <property type="match status" value="1"/>
</dbReference>
<dbReference type="PANTHER" id="PTHR34476">
    <property type="entry name" value="DNA-DIRECTED RNA POLYMERASE SUBUNIT OMEGA"/>
    <property type="match status" value="1"/>
</dbReference>
<dbReference type="PANTHER" id="PTHR34476:SF1">
    <property type="entry name" value="DNA-DIRECTED RNA POLYMERASE SUBUNIT OMEGA"/>
    <property type="match status" value="1"/>
</dbReference>
<dbReference type="Pfam" id="PF01192">
    <property type="entry name" value="RNA_pol_Rpb6"/>
    <property type="match status" value="1"/>
</dbReference>
<dbReference type="SMART" id="SM01409">
    <property type="entry name" value="RNA_pol_Rpb6"/>
    <property type="match status" value="1"/>
</dbReference>
<dbReference type="SUPFAM" id="SSF63562">
    <property type="entry name" value="RPB6/omega subunit-like"/>
    <property type="match status" value="1"/>
</dbReference>
<keyword id="KW-0240">DNA-directed RNA polymerase</keyword>
<keyword id="KW-0548">Nucleotidyltransferase</keyword>
<keyword id="KW-0804">Transcription</keyword>
<keyword id="KW-0808">Transferase</keyword>
<name>RPOZ_RHOP5</name>
<protein>
    <recommendedName>
        <fullName evidence="1">DNA-directed RNA polymerase subunit omega</fullName>
        <shortName evidence="1">RNAP omega subunit</shortName>
        <ecNumber evidence="1">2.7.7.6</ecNumber>
    </recommendedName>
    <alternativeName>
        <fullName evidence="1">RNA polymerase omega subunit</fullName>
    </alternativeName>
    <alternativeName>
        <fullName evidence="1">Transcriptase subunit omega</fullName>
    </alternativeName>
</protein>
<organism>
    <name type="scientific">Rhodopseudomonas palustris (strain BisA53)</name>
    <dbReference type="NCBI Taxonomy" id="316055"/>
    <lineage>
        <taxon>Bacteria</taxon>
        <taxon>Pseudomonadati</taxon>
        <taxon>Pseudomonadota</taxon>
        <taxon>Alphaproteobacteria</taxon>
        <taxon>Hyphomicrobiales</taxon>
        <taxon>Nitrobacteraceae</taxon>
        <taxon>Rhodopseudomonas</taxon>
    </lineage>
</organism>
<reference key="1">
    <citation type="submission" date="2006-09" db="EMBL/GenBank/DDBJ databases">
        <title>Complete sequence of Rhodopseudomonas palustris BisA53.</title>
        <authorList>
            <consortium name="US DOE Joint Genome Institute"/>
            <person name="Copeland A."/>
            <person name="Lucas S."/>
            <person name="Lapidus A."/>
            <person name="Barry K."/>
            <person name="Detter J.C."/>
            <person name="Glavina del Rio T."/>
            <person name="Hammon N."/>
            <person name="Israni S."/>
            <person name="Dalin E."/>
            <person name="Tice H."/>
            <person name="Pitluck S."/>
            <person name="Chain P."/>
            <person name="Malfatti S."/>
            <person name="Shin M."/>
            <person name="Vergez L."/>
            <person name="Schmutz J."/>
            <person name="Larimer F."/>
            <person name="Land M."/>
            <person name="Hauser L."/>
            <person name="Pelletier D.A."/>
            <person name="Kyrpides N."/>
            <person name="Kim E."/>
            <person name="Harwood C.S."/>
            <person name="Oda Y."/>
            <person name="Richardson P."/>
        </authorList>
    </citation>
    <scope>NUCLEOTIDE SEQUENCE [LARGE SCALE GENOMIC DNA]</scope>
    <source>
        <strain>BisA53</strain>
    </source>
</reference>
<proteinExistence type="inferred from homology"/>
<comment type="function">
    <text evidence="1">Promotes RNA polymerase assembly. Latches the N- and C-terminal regions of the beta' subunit thereby facilitating its interaction with the beta and alpha subunits.</text>
</comment>
<comment type="catalytic activity">
    <reaction evidence="1">
        <text>RNA(n) + a ribonucleoside 5'-triphosphate = RNA(n+1) + diphosphate</text>
        <dbReference type="Rhea" id="RHEA:21248"/>
        <dbReference type="Rhea" id="RHEA-COMP:14527"/>
        <dbReference type="Rhea" id="RHEA-COMP:17342"/>
        <dbReference type="ChEBI" id="CHEBI:33019"/>
        <dbReference type="ChEBI" id="CHEBI:61557"/>
        <dbReference type="ChEBI" id="CHEBI:140395"/>
        <dbReference type="EC" id="2.7.7.6"/>
    </reaction>
</comment>
<comment type="subunit">
    <text evidence="1">The RNAP catalytic core consists of 2 alpha, 1 beta, 1 beta' and 1 omega subunit. When a sigma factor is associated with the core the holoenzyme is formed, which can initiate transcription.</text>
</comment>
<comment type="similarity">
    <text evidence="1">Belongs to the RNA polymerase subunit omega family.</text>
</comment>
<feature type="chain" id="PRO_1000005991" description="DNA-directed RNA polymerase subunit omega">
    <location>
        <begin position="1"/>
        <end position="130"/>
    </location>
</feature>
<feature type="region of interest" description="Disordered" evidence="2">
    <location>
        <begin position="109"/>
        <end position="130"/>
    </location>
</feature>
<evidence type="ECO:0000255" key="1">
    <source>
        <dbReference type="HAMAP-Rule" id="MF_00366"/>
    </source>
</evidence>
<evidence type="ECO:0000256" key="2">
    <source>
        <dbReference type="SAM" id="MobiDB-lite"/>
    </source>
</evidence>
<accession>Q07M70</accession>